<accession>Q80U44</accession>
<accession>Q8BRD2</accession>
<accession>Q8CG97</accession>
<organism>
    <name type="scientific">Mus musculus</name>
    <name type="common">Mouse</name>
    <dbReference type="NCBI Taxonomy" id="10090"/>
    <lineage>
        <taxon>Eukaryota</taxon>
        <taxon>Metazoa</taxon>
        <taxon>Chordata</taxon>
        <taxon>Craniata</taxon>
        <taxon>Vertebrata</taxon>
        <taxon>Euteleostomi</taxon>
        <taxon>Mammalia</taxon>
        <taxon>Eutheria</taxon>
        <taxon>Euarchontoglires</taxon>
        <taxon>Glires</taxon>
        <taxon>Rodentia</taxon>
        <taxon>Myomorpha</taxon>
        <taxon>Muroidea</taxon>
        <taxon>Muridae</taxon>
        <taxon>Murinae</taxon>
        <taxon>Mus</taxon>
        <taxon>Mus</taxon>
    </lineage>
</organism>
<name>ZFY16_MOUSE</name>
<dbReference type="EMBL" id="AK122241">
    <property type="protein sequence ID" value="BAC65523.1"/>
    <property type="status" value="ALT_INIT"/>
    <property type="molecule type" value="mRNA"/>
</dbReference>
<dbReference type="EMBL" id="BC042669">
    <property type="protein sequence ID" value="AAH42669.1"/>
    <property type="molecule type" value="mRNA"/>
</dbReference>
<dbReference type="EMBL" id="AK045090">
    <property type="protein sequence ID" value="BAC32215.1"/>
    <property type="molecule type" value="mRNA"/>
</dbReference>
<dbReference type="CCDS" id="CCDS26682.1"/>
<dbReference type="RefSeq" id="NP_775568.1">
    <property type="nucleotide sequence ID" value="NM_173392.4"/>
</dbReference>
<dbReference type="SMR" id="Q80U44"/>
<dbReference type="BioGRID" id="230029">
    <property type="interactions" value="2"/>
</dbReference>
<dbReference type="FunCoup" id="Q80U44">
    <property type="interactions" value="4565"/>
</dbReference>
<dbReference type="STRING" id="10090.ENSMUSP00000022217"/>
<dbReference type="iPTMnet" id="Q80U44"/>
<dbReference type="PhosphoSitePlus" id="Q80U44"/>
<dbReference type="SwissPalm" id="Q80U44"/>
<dbReference type="jPOST" id="Q80U44"/>
<dbReference type="PaxDb" id="10090-ENSMUSP00000022217"/>
<dbReference type="PeptideAtlas" id="Q80U44"/>
<dbReference type="ProteomicsDB" id="299553"/>
<dbReference type="Pumba" id="Q80U44"/>
<dbReference type="DNASU" id="218441"/>
<dbReference type="Ensembl" id="ENSMUST00000022217.9">
    <property type="protein sequence ID" value="ENSMUSP00000022217.9"/>
    <property type="gene ID" value="ENSMUSG00000021706.15"/>
</dbReference>
<dbReference type="GeneID" id="218441"/>
<dbReference type="KEGG" id="mmu:218441"/>
<dbReference type="UCSC" id="uc007rkq.2">
    <property type="organism name" value="mouse"/>
</dbReference>
<dbReference type="AGR" id="MGI:2145181"/>
<dbReference type="CTD" id="9765"/>
<dbReference type="MGI" id="MGI:2145181">
    <property type="gene designation" value="Zfyve16"/>
</dbReference>
<dbReference type="VEuPathDB" id="HostDB:ENSMUSG00000021706"/>
<dbReference type="eggNOG" id="KOG1841">
    <property type="taxonomic scope" value="Eukaryota"/>
</dbReference>
<dbReference type="GeneTree" id="ENSGT00940000154290"/>
<dbReference type="HOGENOM" id="CLU_004326_0_0_1"/>
<dbReference type="InParanoid" id="Q80U44"/>
<dbReference type="OMA" id="GIDKYVC"/>
<dbReference type="OrthoDB" id="5872154at2759"/>
<dbReference type="PhylomeDB" id="Q80U44"/>
<dbReference type="TreeFam" id="TF324904"/>
<dbReference type="Reactome" id="R-MMU-201451">
    <property type="pathway name" value="Signaling by BMP"/>
</dbReference>
<dbReference type="BioGRID-ORCS" id="218441">
    <property type="hits" value="2 hits in 77 CRISPR screens"/>
</dbReference>
<dbReference type="ChiTaRS" id="Zfyve16">
    <property type="organism name" value="mouse"/>
</dbReference>
<dbReference type="PRO" id="PR:Q80U44"/>
<dbReference type="Proteomes" id="UP000000589">
    <property type="component" value="Chromosome 13"/>
</dbReference>
<dbReference type="RNAct" id="Q80U44">
    <property type="molecule type" value="protein"/>
</dbReference>
<dbReference type="Bgee" id="ENSMUSG00000021706">
    <property type="expression patterns" value="Expressed in spermatocyte and 240 other cell types or tissues"/>
</dbReference>
<dbReference type="GO" id="GO:0031901">
    <property type="term" value="C:early endosome membrane"/>
    <property type="evidence" value="ECO:0007669"/>
    <property type="project" value="UniProtKB-SubCell"/>
</dbReference>
<dbReference type="GO" id="GO:0008270">
    <property type="term" value="F:zinc ion binding"/>
    <property type="evidence" value="ECO:0007669"/>
    <property type="project" value="UniProtKB-KW"/>
</dbReference>
<dbReference type="CDD" id="cd15729">
    <property type="entry name" value="FYVE_endofin"/>
    <property type="match status" value="1"/>
</dbReference>
<dbReference type="FunFam" id="3.30.500.40:FF:000002">
    <property type="entry name" value="Zinc finger FYVE domain-containing protein 16"/>
    <property type="match status" value="1"/>
</dbReference>
<dbReference type="FunFam" id="3.30.1360.220:FF:000001">
    <property type="entry name" value="Zinc finger, FYVE domain-containing 9a"/>
    <property type="match status" value="1"/>
</dbReference>
<dbReference type="FunFam" id="3.30.40.10:FF:000084">
    <property type="entry name" value="Zinc finger, FYVE domain-containing 9b"/>
    <property type="match status" value="1"/>
</dbReference>
<dbReference type="Gene3D" id="3.30.500.40">
    <property type="match status" value="1"/>
</dbReference>
<dbReference type="Gene3D" id="3.30.1360.220">
    <property type="entry name" value="Domain of unknown function (DUF3480), N-terminal subdomain"/>
    <property type="match status" value="1"/>
</dbReference>
<dbReference type="Gene3D" id="3.30.40.10">
    <property type="entry name" value="Zinc/RING finger domain, C3HC4 (zinc finger)"/>
    <property type="match status" value="1"/>
</dbReference>
<dbReference type="InterPro" id="IPR022557">
    <property type="entry name" value="SARA-like_C"/>
</dbReference>
<dbReference type="InterPro" id="IPR035438">
    <property type="entry name" value="SARA/endofin"/>
</dbReference>
<dbReference type="InterPro" id="IPR000306">
    <property type="entry name" value="Znf_FYVE"/>
</dbReference>
<dbReference type="InterPro" id="IPR017455">
    <property type="entry name" value="Znf_FYVE-rel"/>
</dbReference>
<dbReference type="InterPro" id="IPR011011">
    <property type="entry name" value="Znf_FYVE_PHD"/>
</dbReference>
<dbReference type="InterPro" id="IPR013083">
    <property type="entry name" value="Znf_RING/FYVE/PHD"/>
</dbReference>
<dbReference type="PANTHER" id="PTHR46319">
    <property type="entry name" value="ZINC FINGER FYVE DOMAIN-CONTAINING PROTEIN"/>
    <property type="match status" value="1"/>
</dbReference>
<dbReference type="PANTHER" id="PTHR46319:SF1">
    <property type="entry name" value="ZINC FINGER FYVE DOMAIN-CONTAINING PROTEIN 16"/>
    <property type="match status" value="1"/>
</dbReference>
<dbReference type="Pfam" id="PF01363">
    <property type="entry name" value="FYVE"/>
    <property type="match status" value="1"/>
</dbReference>
<dbReference type="Pfam" id="PF11979">
    <property type="entry name" value="SARA_C"/>
    <property type="match status" value="1"/>
</dbReference>
<dbReference type="PIRSF" id="PIRSF037289">
    <property type="entry name" value="SARA/endofin"/>
    <property type="match status" value="1"/>
</dbReference>
<dbReference type="SMART" id="SM01421">
    <property type="entry name" value="DUF3480"/>
    <property type="match status" value="1"/>
</dbReference>
<dbReference type="SMART" id="SM00064">
    <property type="entry name" value="FYVE"/>
    <property type="match status" value="1"/>
</dbReference>
<dbReference type="SUPFAM" id="SSF57903">
    <property type="entry name" value="FYVE/PHD zinc finger"/>
    <property type="match status" value="1"/>
</dbReference>
<dbReference type="PROSITE" id="PS50178">
    <property type="entry name" value="ZF_FYVE"/>
    <property type="match status" value="1"/>
</dbReference>
<sequence>MDSYFKAAVSGLDKLLDDFEQNPDKQDYLPDAYAFNQCSVSSESASPQLALLSKDQRCISTCASSEACCEDANETFLEGKIHEGLTSRPNEKNVAGLDLLSSVDASTSDEIQPSCMRRCSKPVCDLISDMGNLVHATNSEEDIKQLLPDDPKSSADTLITLDSSSVSEALTVSSVDCGSNAVREEQNNINAGIKNRDISIKELGVKVDMALFDSCKYNRTENLKDKIISNELETVDFDMPSVLMEQSSEMSNTKDNPQYKRLPCELLKDDGCLAEEKVAVAVNNTECLEEGGGSNTIAMPCKLPENEGISPSDPASKDENFKLPDFPLQENRTSVFMKQTVKEDSRNLDLKDNNDIVHVSGDDVPPSLSCLSLSGSLCGSLIHNNEHSDILPPNESEGQNNDAVTIHEEIQKSDVLDGETDLSKKETCRSIFLQPVNEKKGEGKVEVEEMVISGESLESPEDASSAAAAGSPVALSAASVPEAPGPCEGLTFPSSDMDGQELDYFNIDESMRSGILISDAELDAFLKEQCLSNSNTMSAGENVNDSQLQMNQITMKGLHDENAGDIYFNAEAGAAGENGGVGNCETSDKENTENNGLSIGEKGAIPTERELSACQPDIRDELPVPSIKTQAVGGARPKQLLSLPPGTRSSKELNKPDVVDVPESEPCTANATAVSTCSADHIPDSQVSFNSNYIDIESNFEDGSSFVTANKDSLPENKRKESLVLGQKQPTWVPDSEAPNCMNCQVKFTFTKRRHHCRACGKVFCGVCCNRKCKLQYLEKEARVCVICYETINKAQAFERMMSPGGSCLKSNHSNECATDQPLQETQTSSTPSPTTLPISALKQPNVEGPCSKEQKRVWFADGILPNGEVADTTKLSSGSKRCSDDFSPVLPDVPTMINKVDRTHSPTVEKPNNGLGDIIRSEISQSPTCHTAPVERLPGNTGTEGLPMPGPFTLEDDVFVDSEEPSTPTVVPANSGLPVASISDYRLLCSVAKCVCNNISLLPDDDIGLPPLLATSGEDGSVPVVQERPSHEQIILLLEGEGFPPATFVLNANLLVNVKLVLYSSEKYWYFSTNGLHGLGQAEIIVLLQCLPNEDTVPKDIFRLFITIYKDALKGKYIENLDNLTFTESFLNSKDHGGFLFITPTFQNLDGLPVPRSPFLCGILIQKLEIPWAKVFPMRLMLRLGAEYKAYPAPLTSVRGRKPLFGEIGHTIMNLLVDLRNYQYTLHNIDQLLIHMEMGKSCIKIPRKKYSDVMKVIHSSNEHVISIGASFSTEADSHLVCVQSDGVYQTQANSATGQPRKVTGASFVVFNGALKTSSGFLAKSSIVEDGLMVQITPETMEGLRLALREQKDFRIQCGKVDAVDLREYVDICWVDSEERKNKGVISSVDGMSVEGFPSEKIKLETDFETEEKTVKCTEVFYFLKDQDISILSSSYQFAKEIAVACSAALCPHLRTLKSNRMNKIGLRVSIDTDMVEFQAGCEGQLLPQHYLNDLDSALIPVIHGGTSNSSLPLEIELAFFILENLSE</sequence>
<comment type="function">
    <text evidence="1">May be involved in regulating membrane trafficking in the endosomal pathway. Overexpression induces endosome aggregation. Required to target TOM1 to endosomes (By similarity).</text>
</comment>
<comment type="subunit">
    <text evidence="2">Interacts (via C-terminus) with TOM1 (via C-terminus); interaction is required to target TOM1 to endosomes (By similarity). Does not interact with TOM1L1 or TOM1L2 (By similarity).</text>
</comment>
<comment type="subcellular location">
    <subcellularLocation>
        <location evidence="1">Cytoplasm</location>
    </subcellularLocation>
    <subcellularLocation>
        <location evidence="1">Early endosome membrane</location>
        <topology evidence="1">Peripheral membrane protein</topology>
    </subcellularLocation>
    <text evidence="1">Localized to early endosomes. Membrane-associated, probably via its association with phosphatidylinositol 3-phosphate (PI3P) (By similarity).</text>
</comment>
<comment type="domain">
    <text evidence="1">The FYVE-type zinc finger is necessary and sufficient for its localization into early endosomes and mediates the association with PI3P.</text>
</comment>
<comment type="sequence caution" evidence="5">
    <conflict type="erroneous initiation">
        <sequence resource="EMBL-CDS" id="BAC65523"/>
    </conflict>
</comment>
<evidence type="ECO:0000250" key="1"/>
<evidence type="ECO:0000250" key="2">
    <source>
        <dbReference type="UniProtKB" id="Q7Z3T8"/>
    </source>
</evidence>
<evidence type="ECO:0000255" key="3">
    <source>
        <dbReference type="PROSITE-ProRule" id="PRU00091"/>
    </source>
</evidence>
<evidence type="ECO:0000256" key="4">
    <source>
        <dbReference type="SAM" id="MobiDB-lite"/>
    </source>
</evidence>
<evidence type="ECO:0000305" key="5"/>
<evidence type="ECO:0007744" key="6">
    <source>
    </source>
</evidence>
<reference key="1">
    <citation type="journal article" date="2003" name="DNA Res.">
        <title>Prediction of the coding sequences of mouse homologues of KIAA gene: II. The complete nucleotide sequences of 400 mouse KIAA-homologous cDNAs identified by screening of terminal sequences of cDNA clones randomly sampled from size-fractionated libraries.</title>
        <authorList>
            <person name="Okazaki N."/>
            <person name="Kikuno R."/>
            <person name="Ohara R."/>
            <person name="Inamoto S."/>
            <person name="Aizawa H."/>
            <person name="Yuasa S."/>
            <person name="Nakajima D."/>
            <person name="Nagase T."/>
            <person name="Ohara O."/>
            <person name="Koga H."/>
        </authorList>
    </citation>
    <scope>NUCLEOTIDE SEQUENCE [LARGE SCALE MRNA]</scope>
    <source>
        <tissue>Brain</tissue>
    </source>
</reference>
<reference key="2">
    <citation type="journal article" date="2004" name="Genome Res.">
        <title>The status, quality, and expansion of the NIH full-length cDNA project: the Mammalian Gene Collection (MGC).</title>
        <authorList>
            <consortium name="The MGC Project Team"/>
        </authorList>
    </citation>
    <scope>NUCLEOTIDE SEQUENCE [LARGE SCALE MRNA]</scope>
    <source>
        <strain>FVB/N</strain>
        <tissue>Kidney</tissue>
    </source>
</reference>
<reference key="3">
    <citation type="journal article" date="2005" name="Science">
        <title>The transcriptional landscape of the mammalian genome.</title>
        <authorList>
            <person name="Carninci P."/>
            <person name="Kasukawa T."/>
            <person name="Katayama S."/>
            <person name="Gough J."/>
            <person name="Frith M.C."/>
            <person name="Maeda N."/>
            <person name="Oyama R."/>
            <person name="Ravasi T."/>
            <person name="Lenhard B."/>
            <person name="Wells C."/>
            <person name="Kodzius R."/>
            <person name="Shimokawa K."/>
            <person name="Bajic V.B."/>
            <person name="Brenner S.E."/>
            <person name="Batalov S."/>
            <person name="Forrest A.R."/>
            <person name="Zavolan M."/>
            <person name="Davis M.J."/>
            <person name="Wilming L.G."/>
            <person name="Aidinis V."/>
            <person name="Allen J.E."/>
            <person name="Ambesi-Impiombato A."/>
            <person name="Apweiler R."/>
            <person name="Aturaliya R.N."/>
            <person name="Bailey T.L."/>
            <person name="Bansal M."/>
            <person name="Baxter L."/>
            <person name="Beisel K.W."/>
            <person name="Bersano T."/>
            <person name="Bono H."/>
            <person name="Chalk A.M."/>
            <person name="Chiu K.P."/>
            <person name="Choudhary V."/>
            <person name="Christoffels A."/>
            <person name="Clutterbuck D.R."/>
            <person name="Crowe M.L."/>
            <person name="Dalla E."/>
            <person name="Dalrymple B.P."/>
            <person name="de Bono B."/>
            <person name="Della Gatta G."/>
            <person name="di Bernardo D."/>
            <person name="Down T."/>
            <person name="Engstrom P."/>
            <person name="Fagiolini M."/>
            <person name="Faulkner G."/>
            <person name="Fletcher C.F."/>
            <person name="Fukushima T."/>
            <person name="Furuno M."/>
            <person name="Futaki S."/>
            <person name="Gariboldi M."/>
            <person name="Georgii-Hemming P."/>
            <person name="Gingeras T.R."/>
            <person name="Gojobori T."/>
            <person name="Green R.E."/>
            <person name="Gustincich S."/>
            <person name="Harbers M."/>
            <person name="Hayashi Y."/>
            <person name="Hensch T.K."/>
            <person name="Hirokawa N."/>
            <person name="Hill D."/>
            <person name="Huminiecki L."/>
            <person name="Iacono M."/>
            <person name="Ikeo K."/>
            <person name="Iwama A."/>
            <person name="Ishikawa T."/>
            <person name="Jakt M."/>
            <person name="Kanapin A."/>
            <person name="Katoh M."/>
            <person name="Kawasawa Y."/>
            <person name="Kelso J."/>
            <person name="Kitamura H."/>
            <person name="Kitano H."/>
            <person name="Kollias G."/>
            <person name="Krishnan S.P."/>
            <person name="Kruger A."/>
            <person name="Kummerfeld S.K."/>
            <person name="Kurochkin I.V."/>
            <person name="Lareau L.F."/>
            <person name="Lazarevic D."/>
            <person name="Lipovich L."/>
            <person name="Liu J."/>
            <person name="Liuni S."/>
            <person name="McWilliam S."/>
            <person name="Madan Babu M."/>
            <person name="Madera M."/>
            <person name="Marchionni L."/>
            <person name="Matsuda H."/>
            <person name="Matsuzawa S."/>
            <person name="Miki H."/>
            <person name="Mignone F."/>
            <person name="Miyake S."/>
            <person name="Morris K."/>
            <person name="Mottagui-Tabar S."/>
            <person name="Mulder N."/>
            <person name="Nakano N."/>
            <person name="Nakauchi H."/>
            <person name="Ng P."/>
            <person name="Nilsson R."/>
            <person name="Nishiguchi S."/>
            <person name="Nishikawa S."/>
            <person name="Nori F."/>
            <person name="Ohara O."/>
            <person name="Okazaki Y."/>
            <person name="Orlando V."/>
            <person name="Pang K.C."/>
            <person name="Pavan W.J."/>
            <person name="Pavesi G."/>
            <person name="Pesole G."/>
            <person name="Petrovsky N."/>
            <person name="Piazza S."/>
            <person name="Reed J."/>
            <person name="Reid J.F."/>
            <person name="Ring B.Z."/>
            <person name="Ringwald M."/>
            <person name="Rost B."/>
            <person name="Ruan Y."/>
            <person name="Salzberg S.L."/>
            <person name="Sandelin A."/>
            <person name="Schneider C."/>
            <person name="Schoenbach C."/>
            <person name="Sekiguchi K."/>
            <person name="Semple C.A."/>
            <person name="Seno S."/>
            <person name="Sessa L."/>
            <person name="Sheng Y."/>
            <person name="Shibata Y."/>
            <person name="Shimada H."/>
            <person name="Shimada K."/>
            <person name="Silva D."/>
            <person name="Sinclair B."/>
            <person name="Sperling S."/>
            <person name="Stupka E."/>
            <person name="Sugiura K."/>
            <person name="Sultana R."/>
            <person name="Takenaka Y."/>
            <person name="Taki K."/>
            <person name="Tammoja K."/>
            <person name="Tan S.L."/>
            <person name="Tang S."/>
            <person name="Taylor M.S."/>
            <person name="Tegner J."/>
            <person name="Teichmann S.A."/>
            <person name="Ueda H.R."/>
            <person name="van Nimwegen E."/>
            <person name="Verardo R."/>
            <person name="Wei C.L."/>
            <person name="Yagi K."/>
            <person name="Yamanishi H."/>
            <person name="Zabarovsky E."/>
            <person name="Zhu S."/>
            <person name="Zimmer A."/>
            <person name="Hide W."/>
            <person name="Bult C."/>
            <person name="Grimmond S.M."/>
            <person name="Teasdale R.D."/>
            <person name="Liu E.T."/>
            <person name="Brusic V."/>
            <person name="Quackenbush J."/>
            <person name="Wahlestedt C."/>
            <person name="Mattick J.S."/>
            <person name="Hume D.A."/>
            <person name="Kai C."/>
            <person name="Sasaki D."/>
            <person name="Tomaru Y."/>
            <person name="Fukuda S."/>
            <person name="Kanamori-Katayama M."/>
            <person name="Suzuki M."/>
            <person name="Aoki J."/>
            <person name="Arakawa T."/>
            <person name="Iida J."/>
            <person name="Imamura K."/>
            <person name="Itoh M."/>
            <person name="Kato T."/>
            <person name="Kawaji H."/>
            <person name="Kawagashira N."/>
            <person name="Kawashima T."/>
            <person name="Kojima M."/>
            <person name="Kondo S."/>
            <person name="Konno H."/>
            <person name="Nakano K."/>
            <person name="Ninomiya N."/>
            <person name="Nishio T."/>
            <person name="Okada M."/>
            <person name="Plessy C."/>
            <person name="Shibata K."/>
            <person name="Shiraki T."/>
            <person name="Suzuki S."/>
            <person name="Tagami M."/>
            <person name="Waki K."/>
            <person name="Watahiki A."/>
            <person name="Okamura-Oho Y."/>
            <person name="Suzuki H."/>
            <person name="Kawai J."/>
            <person name="Hayashizaki Y."/>
        </authorList>
    </citation>
    <scope>NUCLEOTIDE SEQUENCE [LARGE SCALE MRNA] OF 1-588</scope>
    <source>
        <strain>C57BL/6J</strain>
    </source>
</reference>
<reference key="4">
    <citation type="journal article" date="2009" name="Immunity">
        <title>The phagosomal proteome in interferon-gamma-activated macrophages.</title>
        <authorList>
            <person name="Trost M."/>
            <person name="English L."/>
            <person name="Lemieux S."/>
            <person name="Courcelles M."/>
            <person name="Desjardins M."/>
            <person name="Thibault P."/>
        </authorList>
    </citation>
    <scope>IDENTIFICATION BY MASS SPECTROMETRY [LARGE SCALE ANALYSIS]</scope>
</reference>
<reference key="5">
    <citation type="journal article" date="2010" name="Cell">
        <title>A tissue-specific atlas of mouse protein phosphorylation and expression.</title>
        <authorList>
            <person name="Huttlin E.L."/>
            <person name="Jedrychowski M.P."/>
            <person name="Elias J.E."/>
            <person name="Goswami T."/>
            <person name="Rad R."/>
            <person name="Beausoleil S.A."/>
            <person name="Villen J."/>
            <person name="Haas W."/>
            <person name="Sowa M.E."/>
            <person name="Gygi S.P."/>
        </authorList>
    </citation>
    <scope>PHOSPHORYLATION [LARGE SCALE ANALYSIS] AT SER-120 AND SER-884</scope>
    <scope>IDENTIFICATION BY MASS SPECTROMETRY [LARGE SCALE ANALYSIS]</scope>
    <source>
        <tissue>Brain</tissue>
        <tissue>Heart</tissue>
        <tissue>Kidney</tissue>
        <tissue>Liver</tissue>
        <tissue>Lung</tissue>
        <tissue>Pancreas</tissue>
        <tissue>Spleen</tissue>
        <tissue>Testis</tissue>
    </source>
</reference>
<protein>
    <recommendedName>
        <fullName>Zinc finger FYVE domain-containing protein 16</fullName>
    </recommendedName>
    <alternativeName>
        <fullName>Endofin</fullName>
    </alternativeName>
    <alternativeName>
        <fullName>Endosomal-associated FYVE domain protein</fullName>
    </alternativeName>
</protein>
<feature type="chain" id="PRO_0000098717" description="Zinc finger FYVE domain-containing protein 16">
    <location>
        <begin position="1"/>
        <end position="1528"/>
    </location>
</feature>
<feature type="zinc finger region" description="FYVE-type" evidence="3">
    <location>
        <begin position="735"/>
        <end position="793"/>
    </location>
</feature>
<feature type="region of interest" description="Disordered" evidence="4">
    <location>
        <begin position="629"/>
        <end position="664"/>
    </location>
</feature>
<feature type="region of interest" description="Disordered" evidence="4">
    <location>
        <begin position="819"/>
        <end position="849"/>
    </location>
</feature>
<feature type="region of interest" description="Disordered" evidence="4">
    <location>
        <begin position="928"/>
        <end position="949"/>
    </location>
</feature>
<feature type="compositionally biased region" description="Basic and acidic residues" evidence="4">
    <location>
        <begin position="649"/>
        <end position="658"/>
    </location>
</feature>
<feature type="compositionally biased region" description="Low complexity" evidence="4">
    <location>
        <begin position="821"/>
        <end position="838"/>
    </location>
</feature>
<feature type="binding site" evidence="3">
    <location>
        <position position="741"/>
    </location>
    <ligand>
        <name>Zn(2+)</name>
        <dbReference type="ChEBI" id="CHEBI:29105"/>
        <label>1</label>
    </ligand>
</feature>
<feature type="binding site" evidence="3">
    <location>
        <position position="744"/>
    </location>
    <ligand>
        <name>Zn(2+)</name>
        <dbReference type="ChEBI" id="CHEBI:29105"/>
        <label>1</label>
    </ligand>
</feature>
<feature type="binding site" evidence="3">
    <location>
        <position position="757"/>
    </location>
    <ligand>
        <name>Zn(2+)</name>
        <dbReference type="ChEBI" id="CHEBI:29105"/>
        <label>2</label>
    </ligand>
</feature>
<feature type="binding site" evidence="3">
    <location>
        <position position="760"/>
    </location>
    <ligand>
        <name>Zn(2+)</name>
        <dbReference type="ChEBI" id="CHEBI:29105"/>
        <label>2</label>
    </ligand>
</feature>
<feature type="binding site" evidence="3">
    <location>
        <position position="765"/>
    </location>
    <ligand>
        <name>Zn(2+)</name>
        <dbReference type="ChEBI" id="CHEBI:29105"/>
        <label>1</label>
    </ligand>
</feature>
<feature type="binding site" evidence="3">
    <location>
        <position position="768"/>
    </location>
    <ligand>
        <name>Zn(2+)</name>
        <dbReference type="ChEBI" id="CHEBI:29105"/>
        <label>1</label>
    </ligand>
</feature>
<feature type="binding site" evidence="3">
    <location>
        <position position="785"/>
    </location>
    <ligand>
        <name>Zn(2+)</name>
        <dbReference type="ChEBI" id="CHEBI:29105"/>
        <label>2</label>
    </ligand>
</feature>
<feature type="binding site" evidence="3">
    <location>
        <position position="788"/>
    </location>
    <ligand>
        <name>Zn(2+)</name>
        <dbReference type="ChEBI" id="CHEBI:29105"/>
        <label>2</label>
    </ligand>
</feature>
<feature type="modified residue" description="Phosphoserine" evidence="6">
    <location>
        <position position="120"/>
    </location>
</feature>
<feature type="modified residue" description="Phosphoserine" evidence="2">
    <location>
        <position position="803"/>
    </location>
</feature>
<feature type="modified residue" description="Phosphoserine" evidence="2">
    <location>
        <position position="833"/>
    </location>
</feature>
<feature type="modified residue" description="Phosphoserine" evidence="6">
    <location>
        <position position="884"/>
    </location>
</feature>
<feature type="modified residue" description="Phosphoserine" evidence="2">
    <location>
        <position position="927"/>
    </location>
</feature>
<feature type="sequence conflict" description="In Ref. 1; BAC65523." evidence="5" ref="1">
    <original>T</original>
    <variation>I</variation>
    <location>
        <position position="405"/>
    </location>
</feature>
<proteinExistence type="evidence at protein level"/>
<gene>
    <name type="primary">Zfyve16</name>
    <name type="synonym">Kiaa0305</name>
</gene>
<keyword id="KW-0963">Cytoplasm</keyword>
<keyword id="KW-0967">Endosome</keyword>
<keyword id="KW-0472">Membrane</keyword>
<keyword id="KW-0479">Metal-binding</keyword>
<keyword id="KW-0597">Phosphoprotein</keyword>
<keyword id="KW-1185">Reference proteome</keyword>
<keyword id="KW-0862">Zinc</keyword>
<keyword id="KW-0863">Zinc-finger</keyword>